<sequence>MSRHHSRFERDYRIGWDRREWSVNGTHGATSVCSVTSGAGGSTASSLSARPGLLPLPVVPSRLPTPATAPAPCTTGSSEAITSLVVSSASAATTKAPGISKADNQSQGLTTSIRWGQTPVNQSTPWDTDEPPSKQMRESDNPGTGPWVTTVAAGNQPSLITHSYGVTQPPTFSPAVNVQAPVIGVTPSLPPHVGPQLPLIPGHYSLPQPPSQPLSSVVVNMPAQALYASPQPLAVSTLPGVGQVSRPGPTPVGNGHMAGPLLPPPPPAQPSAALPSSVPATNGPPTTDSAHGLQMLRTIGVGKYEFTDPGHPKEMLKELNQQRRAKAFTDLKIVVEGREFEVHQNVLASCSLYFKDLIQRSVQDSSQSSREKLELVLSNLQADVLELLLEFVYTGSLVIDSANAKTLLEAASKFQFHTFCKVCVSFLEKQLTASNCLGVLAMAEAMQCSELYHMAKAFALQIFPEVAAQEEILSISKDDFIAYVSNDSLNTKAEELVYETVIKWIKKDPATRAQYAAELLAAVRLPFIHPSYLLNVVDNEELIKSSEACRDLVNEAKRYHMLPHARQEMQTPRTRPRLSAGVAEVIVLVGGRQMVGMTQRSLVAVTCWNPQNNKWYPLASLPFYDREFFSVVSAGDNIYLSGGMESGVTLADVWCYMSLLDNWNLVSRMTVPRCRHNSLVYDGKIYTLGGLGVAGNVDHVERYDTITNQWEAVAPLPKAVHSAAATVCGGKIYVFGGVNEAGRAAGVLQSYVPQTNTWSFIESPMIDNKYAPAVTLNGFVFILGGAYARATTIYDPEKGNIKAGPNMNHSRQFCSAVVLDGKIYATGGIVSSEGPALGNMEAYEPTTNTWTLLPHMPCPVFRHGCVVIKKYIQSG</sequence>
<organism>
    <name type="scientific">Mus musculus</name>
    <name type="common">Mouse</name>
    <dbReference type="NCBI Taxonomy" id="10090"/>
    <lineage>
        <taxon>Eukaryota</taxon>
        <taxon>Metazoa</taxon>
        <taxon>Chordata</taxon>
        <taxon>Craniata</taxon>
        <taxon>Vertebrata</taxon>
        <taxon>Euteleostomi</taxon>
        <taxon>Mammalia</taxon>
        <taxon>Eutheria</taxon>
        <taxon>Euarchontoglires</taxon>
        <taxon>Glires</taxon>
        <taxon>Rodentia</taxon>
        <taxon>Myomorpha</taxon>
        <taxon>Muroidea</taxon>
        <taxon>Muridae</taxon>
        <taxon>Murinae</taxon>
        <taxon>Mus</taxon>
        <taxon>Mus</taxon>
    </lineage>
</organism>
<protein>
    <recommendedName>
        <fullName>Kelch-like protein 29</fullName>
    </recommendedName>
    <alternativeName>
        <fullName>Kelch repeat and BTB domain-containing protein 9</fullName>
    </alternativeName>
</protein>
<proteinExistence type="evidence at transcript level"/>
<name>KLH29_MOUSE</name>
<dbReference type="EMBL" id="AK122572">
    <property type="protein sequence ID" value="BAC65854.1"/>
    <property type="status" value="ALT_INIT"/>
    <property type="molecule type" value="mRNA"/>
</dbReference>
<dbReference type="EMBL" id="BC138283">
    <property type="protein sequence ID" value="AAI38284.1"/>
    <property type="status" value="ALT_INIT"/>
    <property type="molecule type" value="mRNA"/>
</dbReference>
<dbReference type="EMBL" id="BC145748">
    <property type="protein sequence ID" value="AAI45749.1"/>
    <property type="status" value="ALT_INIT"/>
    <property type="molecule type" value="mRNA"/>
</dbReference>
<dbReference type="CCDS" id="CCDS49021.1"/>
<dbReference type="RefSeq" id="NP_001157965.1">
    <property type="nucleotide sequence ID" value="NM_001164493.1"/>
</dbReference>
<dbReference type="SMR" id="Q80T74"/>
<dbReference type="BioGRID" id="228982">
    <property type="interactions" value="9"/>
</dbReference>
<dbReference type="FunCoup" id="Q80T74">
    <property type="interactions" value="80"/>
</dbReference>
<dbReference type="STRING" id="10090.ENSMUSP00000020958"/>
<dbReference type="GlyGen" id="Q80T74">
    <property type="glycosylation" value="3 sites"/>
</dbReference>
<dbReference type="iPTMnet" id="Q80T74"/>
<dbReference type="PhosphoSitePlus" id="Q80T74"/>
<dbReference type="PaxDb" id="10090-ENSMUSP00000020958"/>
<dbReference type="ProteomicsDB" id="263626"/>
<dbReference type="Pumba" id="Q80T74"/>
<dbReference type="Antibodypedia" id="27362">
    <property type="antibodies" value="87 antibodies from 24 providers"/>
</dbReference>
<dbReference type="Ensembl" id="ENSMUST00000020958.9">
    <property type="protein sequence ID" value="ENSMUSP00000020958.9"/>
    <property type="gene ID" value="ENSMUSG00000020627.11"/>
</dbReference>
<dbReference type="GeneID" id="208439"/>
<dbReference type="KEGG" id="mmu:208439"/>
<dbReference type="UCSC" id="uc007myw.3">
    <property type="organism name" value="mouse"/>
</dbReference>
<dbReference type="AGR" id="MGI:2683857"/>
<dbReference type="CTD" id="114818"/>
<dbReference type="MGI" id="MGI:2683857">
    <property type="gene designation" value="Klhl29"/>
</dbReference>
<dbReference type="VEuPathDB" id="HostDB:ENSMUSG00000020627"/>
<dbReference type="eggNOG" id="KOG4441">
    <property type="taxonomic scope" value="Eukaryota"/>
</dbReference>
<dbReference type="GeneTree" id="ENSGT00940000158824"/>
<dbReference type="HOGENOM" id="CLU_004253_4_0_1"/>
<dbReference type="InParanoid" id="Q80T74"/>
<dbReference type="OMA" id="SHSYGMN"/>
<dbReference type="OrthoDB" id="45365at2759"/>
<dbReference type="PhylomeDB" id="Q80T74"/>
<dbReference type="BioGRID-ORCS" id="208439">
    <property type="hits" value="4 hits in 77 CRISPR screens"/>
</dbReference>
<dbReference type="ChiTaRS" id="Klhl29">
    <property type="organism name" value="mouse"/>
</dbReference>
<dbReference type="PRO" id="PR:Q80T74"/>
<dbReference type="Proteomes" id="UP000000589">
    <property type="component" value="Chromosome 12"/>
</dbReference>
<dbReference type="RNAct" id="Q80T74">
    <property type="molecule type" value="protein"/>
</dbReference>
<dbReference type="Bgee" id="ENSMUSG00000020627">
    <property type="expression patterns" value="Expressed in humerus cartilage element and 196 other cell types or tissues"/>
</dbReference>
<dbReference type="ExpressionAtlas" id="Q80T74">
    <property type="expression patterns" value="baseline and differential"/>
</dbReference>
<dbReference type="CDD" id="cd18468">
    <property type="entry name" value="BACK_KLHL29_KBTBD9"/>
    <property type="match status" value="1"/>
</dbReference>
<dbReference type="FunFam" id="1.25.40.420:FF:000001">
    <property type="entry name" value="Kelch-like family member 12"/>
    <property type="match status" value="1"/>
</dbReference>
<dbReference type="Gene3D" id="1.25.40.420">
    <property type="match status" value="1"/>
</dbReference>
<dbReference type="Gene3D" id="2.120.10.80">
    <property type="entry name" value="Kelch-type beta propeller"/>
    <property type="match status" value="2"/>
</dbReference>
<dbReference type="Gene3D" id="3.30.710.10">
    <property type="entry name" value="Potassium Channel Kv1.1, Chain A"/>
    <property type="match status" value="1"/>
</dbReference>
<dbReference type="InterPro" id="IPR011705">
    <property type="entry name" value="BACK"/>
</dbReference>
<dbReference type="InterPro" id="IPR000210">
    <property type="entry name" value="BTB/POZ_dom"/>
</dbReference>
<dbReference type="InterPro" id="IPR015915">
    <property type="entry name" value="Kelch-typ_b-propeller"/>
</dbReference>
<dbReference type="InterPro" id="IPR006652">
    <property type="entry name" value="Kelch_1"/>
</dbReference>
<dbReference type="InterPro" id="IPR011333">
    <property type="entry name" value="SKP1/BTB/POZ_sf"/>
</dbReference>
<dbReference type="PANTHER" id="PTHR45632:SF5">
    <property type="entry name" value="KELCH-LIKE PROTEIN 22"/>
    <property type="match status" value="1"/>
</dbReference>
<dbReference type="PANTHER" id="PTHR45632">
    <property type="entry name" value="LD33804P"/>
    <property type="match status" value="1"/>
</dbReference>
<dbReference type="Pfam" id="PF07707">
    <property type="entry name" value="BACK"/>
    <property type="match status" value="1"/>
</dbReference>
<dbReference type="Pfam" id="PF00651">
    <property type="entry name" value="BTB"/>
    <property type="match status" value="1"/>
</dbReference>
<dbReference type="Pfam" id="PF01344">
    <property type="entry name" value="Kelch_1"/>
    <property type="match status" value="1"/>
</dbReference>
<dbReference type="Pfam" id="PF24681">
    <property type="entry name" value="Kelch_KLHDC2_KLHL20_DRC7"/>
    <property type="match status" value="1"/>
</dbReference>
<dbReference type="SMART" id="SM00875">
    <property type="entry name" value="BACK"/>
    <property type="match status" value="1"/>
</dbReference>
<dbReference type="SMART" id="SM00225">
    <property type="entry name" value="BTB"/>
    <property type="match status" value="1"/>
</dbReference>
<dbReference type="SMART" id="SM00612">
    <property type="entry name" value="Kelch"/>
    <property type="match status" value="6"/>
</dbReference>
<dbReference type="SUPFAM" id="SSF117281">
    <property type="entry name" value="Kelch motif"/>
    <property type="match status" value="1"/>
</dbReference>
<dbReference type="SUPFAM" id="SSF54695">
    <property type="entry name" value="POZ domain"/>
    <property type="match status" value="1"/>
</dbReference>
<dbReference type="PROSITE" id="PS50097">
    <property type="entry name" value="BTB"/>
    <property type="match status" value="1"/>
</dbReference>
<feature type="chain" id="PRO_0000119087" description="Kelch-like protein 29">
    <location>
        <begin position="1"/>
        <end position="875"/>
    </location>
</feature>
<feature type="domain" description="BTB" evidence="1">
    <location>
        <begin position="329"/>
        <end position="401"/>
    </location>
</feature>
<feature type="repeat" description="Kelch 1">
    <location>
        <begin position="585"/>
        <end position="635"/>
    </location>
</feature>
<feature type="repeat" description="Kelch 2">
    <location>
        <begin position="637"/>
        <end position="683"/>
    </location>
</feature>
<feature type="repeat" description="Kelch 3">
    <location>
        <begin position="684"/>
        <end position="730"/>
    </location>
</feature>
<feature type="repeat" description="Kelch 4">
    <location>
        <begin position="732"/>
        <end position="778"/>
    </location>
</feature>
<feature type="repeat" description="Kelch 5">
    <location>
        <begin position="779"/>
        <end position="821"/>
    </location>
</feature>
<feature type="repeat" description="Kelch 6">
    <location>
        <begin position="822"/>
        <end position="870"/>
    </location>
</feature>
<feature type="region of interest" description="Disordered" evidence="2">
    <location>
        <begin position="113"/>
        <end position="145"/>
    </location>
</feature>
<feature type="region of interest" description="Disordered" evidence="2">
    <location>
        <begin position="240"/>
        <end position="291"/>
    </location>
</feature>
<feature type="compositionally biased region" description="Polar residues" evidence="2">
    <location>
        <begin position="113"/>
        <end position="126"/>
    </location>
</feature>
<feature type="compositionally biased region" description="Basic and acidic residues" evidence="2">
    <location>
        <begin position="131"/>
        <end position="140"/>
    </location>
</feature>
<feature type="compositionally biased region" description="Low complexity" evidence="2">
    <location>
        <begin position="270"/>
        <end position="280"/>
    </location>
</feature>
<reference key="1">
    <citation type="journal article" date="2003" name="DNA Res.">
        <title>Prediction of the coding sequences of mouse homologues of KIAA gene: II. The complete nucleotide sequences of 400 mouse KIAA-homologous cDNAs identified by screening of terminal sequences of cDNA clones randomly sampled from size-fractionated libraries.</title>
        <authorList>
            <person name="Okazaki N."/>
            <person name="Kikuno R."/>
            <person name="Ohara R."/>
            <person name="Inamoto S."/>
            <person name="Aizawa H."/>
            <person name="Yuasa S."/>
            <person name="Nakajima D."/>
            <person name="Nagase T."/>
            <person name="Ohara O."/>
            <person name="Koga H."/>
        </authorList>
    </citation>
    <scope>NUCLEOTIDE SEQUENCE [LARGE SCALE MRNA]</scope>
    <source>
        <tissue>Brain</tissue>
    </source>
</reference>
<reference key="2">
    <citation type="journal article" date="2004" name="Genome Res.">
        <title>The status, quality, and expansion of the NIH full-length cDNA project: the Mammalian Gene Collection (MGC).</title>
        <authorList>
            <consortium name="The MGC Project Team"/>
        </authorList>
    </citation>
    <scope>NUCLEOTIDE SEQUENCE [LARGE SCALE MRNA]</scope>
    <source>
        <tissue>Brain</tissue>
    </source>
</reference>
<comment type="caution">
    <text evidence="3">Although the complete sequence is not known with certainty, sequence shown here appears to be the most probable in accordance with human sequence ortholog.</text>
</comment>
<comment type="sequence caution" evidence="3">
    <conflict type="erroneous initiation">
        <sequence resource="EMBL-CDS" id="AAI38284"/>
    </conflict>
    <text>Truncated N-terminus.</text>
</comment>
<comment type="sequence caution" evidence="3">
    <conflict type="erroneous initiation">
        <sequence resource="EMBL-CDS" id="AAI45749"/>
    </conflict>
    <text>Truncated N-terminus.</text>
</comment>
<comment type="sequence caution" evidence="3">
    <conflict type="erroneous initiation">
        <sequence resource="EMBL-CDS" id="BAC65854"/>
    </conflict>
    <text>Extended N-terminus.</text>
</comment>
<evidence type="ECO:0000255" key="1">
    <source>
        <dbReference type="PROSITE-ProRule" id="PRU00037"/>
    </source>
</evidence>
<evidence type="ECO:0000256" key="2">
    <source>
        <dbReference type="SAM" id="MobiDB-lite"/>
    </source>
</evidence>
<evidence type="ECO:0000305" key="3"/>
<accession>Q80T74</accession>
<accession>A6H646</accession>
<gene>
    <name type="primary">Klhl29</name>
    <name type="synonym">Kbtbd9</name>
    <name type="synonym">Kiaa1921</name>
</gene>
<keyword id="KW-0880">Kelch repeat</keyword>
<keyword id="KW-1185">Reference proteome</keyword>
<keyword id="KW-0677">Repeat</keyword>